<dbReference type="EMBL" id="CP000046">
    <property type="protein sequence ID" value="AAW37790.1"/>
    <property type="molecule type" value="Genomic_DNA"/>
</dbReference>
<dbReference type="RefSeq" id="WP_000532966.1">
    <property type="nucleotide sequence ID" value="NZ_JBGOFO010000005.1"/>
</dbReference>
<dbReference type="SMR" id="Q5HHZ9"/>
<dbReference type="KEGG" id="sac:SACOL0727"/>
<dbReference type="HOGENOM" id="CLU_062974_2_0_9"/>
<dbReference type="Proteomes" id="UP000000530">
    <property type="component" value="Chromosome"/>
</dbReference>
<dbReference type="GO" id="GO:0005829">
    <property type="term" value="C:cytosol"/>
    <property type="evidence" value="ECO:0007669"/>
    <property type="project" value="TreeGrafter"/>
</dbReference>
<dbReference type="GO" id="GO:0003677">
    <property type="term" value="F:DNA binding"/>
    <property type="evidence" value="ECO:0007669"/>
    <property type="project" value="UniProtKB-UniRule"/>
</dbReference>
<dbReference type="GO" id="GO:0006355">
    <property type="term" value="P:regulation of DNA-templated transcription"/>
    <property type="evidence" value="ECO:0007669"/>
    <property type="project" value="UniProtKB-UniRule"/>
</dbReference>
<dbReference type="FunFam" id="1.10.10.200:FF:000003">
    <property type="entry name" value="Probable transcriptional regulatory protein YeeN"/>
    <property type="match status" value="1"/>
</dbReference>
<dbReference type="Gene3D" id="1.10.10.200">
    <property type="match status" value="1"/>
</dbReference>
<dbReference type="Gene3D" id="3.30.70.980">
    <property type="match status" value="2"/>
</dbReference>
<dbReference type="HAMAP" id="MF_00693">
    <property type="entry name" value="Transcrip_reg_TACO1"/>
    <property type="match status" value="1"/>
</dbReference>
<dbReference type="HAMAP" id="MF_00918">
    <property type="entry name" value="Transcrip_reg_TACO1_YeeN"/>
    <property type="match status" value="1"/>
</dbReference>
<dbReference type="InterPro" id="IPR017856">
    <property type="entry name" value="Integrase-like_N"/>
</dbReference>
<dbReference type="InterPro" id="IPR048300">
    <property type="entry name" value="TACO1_YebC-like_2nd/3rd_dom"/>
</dbReference>
<dbReference type="InterPro" id="IPR049083">
    <property type="entry name" value="TACO1_YebC_N"/>
</dbReference>
<dbReference type="InterPro" id="IPR002876">
    <property type="entry name" value="Transcrip_reg_TACO1-like"/>
</dbReference>
<dbReference type="InterPro" id="IPR026564">
    <property type="entry name" value="Transcrip_reg_TACO1-like_dom3"/>
</dbReference>
<dbReference type="InterPro" id="IPR026562">
    <property type="entry name" value="Transcrip_reg_TACO1_YeeN"/>
</dbReference>
<dbReference type="InterPro" id="IPR029072">
    <property type="entry name" value="YebC-like"/>
</dbReference>
<dbReference type="NCBIfam" id="NF001030">
    <property type="entry name" value="PRK00110.1"/>
    <property type="match status" value="1"/>
</dbReference>
<dbReference type="NCBIfam" id="NF009044">
    <property type="entry name" value="PRK12378.1"/>
    <property type="match status" value="1"/>
</dbReference>
<dbReference type="NCBIfam" id="TIGR01033">
    <property type="entry name" value="YebC/PmpR family DNA-binding transcriptional regulator"/>
    <property type="match status" value="1"/>
</dbReference>
<dbReference type="PANTHER" id="PTHR12532">
    <property type="entry name" value="TRANSLATIONAL ACTIVATOR OF CYTOCHROME C OXIDASE 1"/>
    <property type="match status" value="1"/>
</dbReference>
<dbReference type="PANTHER" id="PTHR12532:SF0">
    <property type="entry name" value="TRANSLATIONAL ACTIVATOR OF CYTOCHROME C OXIDASE 1"/>
    <property type="match status" value="1"/>
</dbReference>
<dbReference type="Pfam" id="PF20772">
    <property type="entry name" value="TACO1_YebC_N"/>
    <property type="match status" value="1"/>
</dbReference>
<dbReference type="Pfam" id="PF01709">
    <property type="entry name" value="Transcrip_reg"/>
    <property type="match status" value="1"/>
</dbReference>
<dbReference type="SUPFAM" id="SSF75625">
    <property type="entry name" value="YebC-like"/>
    <property type="match status" value="1"/>
</dbReference>
<name>Y727_STAAC</name>
<accession>Q5HHZ9</accession>
<evidence type="ECO:0000255" key="1">
    <source>
        <dbReference type="HAMAP-Rule" id="MF_00918"/>
    </source>
</evidence>
<comment type="subcellular location">
    <subcellularLocation>
        <location evidence="1">Cytoplasm</location>
    </subcellularLocation>
</comment>
<comment type="similarity">
    <text evidence="1">Belongs to the TACO1 family. YeeN subfamily.</text>
</comment>
<keyword id="KW-0963">Cytoplasm</keyword>
<keyword id="KW-0238">DNA-binding</keyword>
<keyword id="KW-0804">Transcription</keyword>
<keyword id="KW-0805">Transcription regulation</keyword>
<feature type="chain" id="PRO_0000175891" description="Probable transcriptional regulatory protein SACOL0727">
    <location>
        <begin position="1"/>
        <end position="238"/>
    </location>
</feature>
<reference key="1">
    <citation type="journal article" date="2005" name="J. Bacteriol.">
        <title>Insights on evolution of virulence and resistance from the complete genome analysis of an early methicillin-resistant Staphylococcus aureus strain and a biofilm-producing methicillin-resistant Staphylococcus epidermidis strain.</title>
        <authorList>
            <person name="Gill S.R."/>
            <person name="Fouts D.E."/>
            <person name="Archer G.L."/>
            <person name="Mongodin E.F."/>
            <person name="DeBoy R.T."/>
            <person name="Ravel J."/>
            <person name="Paulsen I.T."/>
            <person name="Kolonay J.F."/>
            <person name="Brinkac L.M."/>
            <person name="Beanan M.J."/>
            <person name="Dodson R.J."/>
            <person name="Daugherty S.C."/>
            <person name="Madupu R."/>
            <person name="Angiuoli S.V."/>
            <person name="Durkin A.S."/>
            <person name="Haft D.H."/>
            <person name="Vamathevan J.J."/>
            <person name="Khouri H."/>
            <person name="Utterback T.R."/>
            <person name="Lee C."/>
            <person name="Dimitrov G."/>
            <person name="Jiang L."/>
            <person name="Qin H."/>
            <person name="Weidman J."/>
            <person name="Tran K."/>
            <person name="Kang K.H."/>
            <person name="Hance I.R."/>
            <person name="Nelson K.E."/>
            <person name="Fraser C.M."/>
        </authorList>
    </citation>
    <scope>NUCLEOTIDE SEQUENCE [LARGE SCALE GENOMIC DNA]</scope>
    <source>
        <strain>COL</strain>
    </source>
</reference>
<gene>
    <name type="ordered locus">SACOL0727</name>
</gene>
<protein>
    <recommendedName>
        <fullName evidence="1">Probable transcriptional regulatory protein SACOL0727</fullName>
    </recommendedName>
</protein>
<proteinExistence type="inferred from homology"/>
<organism>
    <name type="scientific">Staphylococcus aureus (strain COL)</name>
    <dbReference type="NCBI Taxonomy" id="93062"/>
    <lineage>
        <taxon>Bacteria</taxon>
        <taxon>Bacillati</taxon>
        <taxon>Bacillota</taxon>
        <taxon>Bacilli</taxon>
        <taxon>Bacillales</taxon>
        <taxon>Staphylococcaceae</taxon>
        <taxon>Staphylococcus</taxon>
    </lineage>
</organism>
<sequence>MGRKWNNIKEKKAQKDKNTSRIYAKFGKEIYVAAKSGEPNPESNQALRLVLERAKTYSVPNHIIEKAIDKAKGAGDENFDHLRYEGFGPSGSMLIVDALTNNVNRTASDVRAAFGKNGGNMGVSGSVAYMFDHVATFGIEGKSVDEILETLMEQDVDVNDVIDDNGLTIVYAEPDQFAVVQDALRAAGVEEFKVAEFEMLPQTDIELSEADQVTFEKLIDALEDLEDVQNVFHNVDLK</sequence>